<proteinExistence type="inferred from homology"/>
<evidence type="ECO:0000255" key="1">
    <source>
        <dbReference type="HAMAP-Rule" id="MF_01371"/>
    </source>
</evidence>
<evidence type="ECO:0000305" key="2"/>
<reference key="1">
    <citation type="journal article" date="2010" name="Genome Biol. Evol.">
        <title>Continuing evolution of Burkholderia mallei through genome reduction and large-scale rearrangements.</title>
        <authorList>
            <person name="Losada L."/>
            <person name="Ronning C.M."/>
            <person name="DeShazer D."/>
            <person name="Woods D."/>
            <person name="Fedorova N."/>
            <person name="Kim H.S."/>
            <person name="Shabalina S.A."/>
            <person name="Pearson T.R."/>
            <person name="Brinkac L."/>
            <person name="Tan P."/>
            <person name="Nandi T."/>
            <person name="Crabtree J."/>
            <person name="Badger J."/>
            <person name="Beckstrom-Sternberg S."/>
            <person name="Saqib M."/>
            <person name="Schutzer S.E."/>
            <person name="Keim P."/>
            <person name="Nierman W.C."/>
        </authorList>
    </citation>
    <scope>NUCLEOTIDE SEQUENCE [LARGE SCALE GENOMIC DNA]</scope>
    <source>
        <strain>1106a</strain>
    </source>
</reference>
<gene>
    <name evidence="1" type="primary">rpmD</name>
    <name type="ordered locus">BURPS1106A_3786</name>
</gene>
<organism>
    <name type="scientific">Burkholderia pseudomallei (strain 1106a)</name>
    <dbReference type="NCBI Taxonomy" id="357348"/>
    <lineage>
        <taxon>Bacteria</taxon>
        <taxon>Pseudomonadati</taxon>
        <taxon>Pseudomonadota</taxon>
        <taxon>Betaproteobacteria</taxon>
        <taxon>Burkholderiales</taxon>
        <taxon>Burkholderiaceae</taxon>
        <taxon>Burkholderia</taxon>
        <taxon>pseudomallei group</taxon>
    </lineage>
</organism>
<sequence length="60" mass="6621">MSEKTVKVQLVKSLIGTRESHRATVRGLGLRRLNSVSELQDTPAVRGMINKVSYLVKVIG</sequence>
<protein>
    <recommendedName>
        <fullName evidence="1">Large ribosomal subunit protein uL30</fullName>
    </recommendedName>
    <alternativeName>
        <fullName evidence="2">50S ribosomal protein L30</fullName>
    </alternativeName>
</protein>
<accession>A3P095</accession>
<keyword id="KW-0687">Ribonucleoprotein</keyword>
<keyword id="KW-0689">Ribosomal protein</keyword>
<name>RL30_BURP0</name>
<feature type="chain" id="PRO_1000056021" description="Large ribosomal subunit protein uL30">
    <location>
        <begin position="1"/>
        <end position="60"/>
    </location>
</feature>
<comment type="subunit">
    <text evidence="1">Part of the 50S ribosomal subunit.</text>
</comment>
<comment type="similarity">
    <text evidence="1">Belongs to the universal ribosomal protein uL30 family.</text>
</comment>
<dbReference type="EMBL" id="CP000572">
    <property type="protein sequence ID" value="ABN89184.1"/>
    <property type="molecule type" value="Genomic_DNA"/>
</dbReference>
<dbReference type="RefSeq" id="WP_004202755.1">
    <property type="nucleotide sequence ID" value="NC_009076.1"/>
</dbReference>
<dbReference type="SMR" id="A3P095"/>
<dbReference type="GeneID" id="93061814"/>
<dbReference type="KEGG" id="bpl:BURPS1106A_3786"/>
<dbReference type="HOGENOM" id="CLU_131047_1_4_4"/>
<dbReference type="Proteomes" id="UP000006738">
    <property type="component" value="Chromosome I"/>
</dbReference>
<dbReference type="GO" id="GO:0022625">
    <property type="term" value="C:cytosolic large ribosomal subunit"/>
    <property type="evidence" value="ECO:0007669"/>
    <property type="project" value="TreeGrafter"/>
</dbReference>
<dbReference type="GO" id="GO:0003735">
    <property type="term" value="F:structural constituent of ribosome"/>
    <property type="evidence" value="ECO:0007669"/>
    <property type="project" value="InterPro"/>
</dbReference>
<dbReference type="GO" id="GO:0006412">
    <property type="term" value="P:translation"/>
    <property type="evidence" value="ECO:0007669"/>
    <property type="project" value="UniProtKB-UniRule"/>
</dbReference>
<dbReference type="CDD" id="cd01658">
    <property type="entry name" value="Ribosomal_L30"/>
    <property type="match status" value="1"/>
</dbReference>
<dbReference type="FunFam" id="3.30.1390.20:FF:000001">
    <property type="entry name" value="50S ribosomal protein L30"/>
    <property type="match status" value="1"/>
</dbReference>
<dbReference type="Gene3D" id="3.30.1390.20">
    <property type="entry name" value="Ribosomal protein L30, ferredoxin-like fold domain"/>
    <property type="match status" value="1"/>
</dbReference>
<dbReference type="HAMAP" id="MF_01371_B">
    <property type="entry name" value="Ribosomal_uL30_B"/>
    <property type="match status" value="1"/>
</dbReference>
<dbReference type="InterPro" id="IPR036919">
    <property type="entry name" value="Ribo_uL30_ferredoxin-like_sf"/>
</dbReference>
<dbReference type="InterPro" id="IPR005996">
    <property type="entry name" value="Ribosomal_uL30_bac-type"/>
</dbReference>
<dbReference type="InterPro" id="IPR016082">
    <property type="entry name" value="Ribosomal_uL30_ferredoxin-like"/>
</dbReference>
<dbReference type="NCBIfam" id="TIGR01308">
    <property type="entry name" value="rpmD_bact"/>
    <property type="match status" value="1"/>
</dbReference>
<dbReference type="PANTHER" id="PTHR15892:SF2">
    <property type="entry name" value="LARGE RIBOSOMAL SUBUNIT PROTEIN UL30M"/>
    <property type="match status" value="1"/>
</dbReference>
<dbReference type="PANTHER" id="PTHR15892">
    <property type="entry name" value="MITOCHONDRIAL RIBOSOMAL PROTEIN L30"/>
    <property type="match status" value="1"/>
</dbReference>
<dbReference type="Pfam" id="PF00327">
    <property type="entry name" value="Ribosomal_L30"/>
    <property type="match status" value="1"/>
</dbReference>
<dbReference type="PIRSF" id="PIRSF002211">
    <property type="entry name" value="Ribosomal_L30_bac-type"/>
    <property type="match status" value="1"/>
</dbReference>
<dbReference type="SUPFAM" id="SSF55129">
    <property type="entry name" value="Ribosomal protein L30p/L7e"/>
    <property type="match status" value="1"/>
</dbReference>